<accession>Q2L008</accession>
<name>PIMT_BORA1</name>
<protein>
    <recommendedName>
        <fullName evidence="1">Protein-L-isoaspartate O-methyltransferase</fullName>
        <ecNumber evidence="1">2.1.1.77</ecNumber>
    </recommendedName>
    <alternativeName>
        <fullName evidence="1">L-isoaspartyl protein carboxyl methyltransferase</fullName>
    </alternativeName>
    <alternativeName>
        <fullName evidence="1">Protein L-isoaspartyl methyltransferase</fullName>
    </alternativeName>
    <alternativeName>
        <fullName evidence="1">Protein-beta-aspartate methyltransferase</fullName>
        <shortName evidence="1">PIMT</shortName>
    </alternativeName>
</protein>
<feature type="chain" id="PRO_0000351818" description="Protein-L-isoaspartate O-methyltransferase">
    <location>
        <begin position="1"/>
        <end position="264"/>
    </location>
</feature>
<feature type="region of interest" description="Disordered" evidence="2">
    <location>
        <begin position="1"/>
        <end position="49"/>
    </location>
</feature>
<feature type="compositionally biased region" description="Polar residues" evidence="2">
    <location>
        <begin position="24"/>
        <end position="35"/>
    </location>
</feature>
<feature type="active site" evidence="1">
    <location>
        <position position="112"/>
    </location>
</feature>
<proteinExistence type="inferred from homology"/>
<comment type="function">
    <text evidence="1">Catalyzes the methyl esterification of L-isoaspartyl residues in peptides and proteins that result from spontaneous decomposition of normal L-aspartyl and L-asparaginyl residues. It plays a role in the repair and/or degradation of damaged proteins.</text>
</comment>
<comment type="catalytic activity">
    <reaction evidence="1">
        <text>[protein]-L-isoaspartate + S-adenosyl-L-methionine = [protein]-L-isoaspartate alpha-methyl ester + S-adenosyl-L-homocysteine</text>
        <dbReference type="Rhea" id="RHEA:12705"/>
        <dbReference type="Rhea" id="RHEA-COMP:12143"/>
        <dbReference type="Rhea" id="RHEA-COMP:12144"/>
        <dbReference type="ChEBI" id="CHEBI:57856"/>
        <dbReference type="ChEBI" id="CHEBI:59789"/>
        <dbReference type="ChEBI" id="CHEBI:90596"/>
        <dbReference type="ChEBI" id="CHEBI:90598"/>
        <dbReference type="EC" id="2.1.1.77"/>
    </reaction>
</comment>
<comment type="subcellular location">
    <subcellularLocation>
        <location evidence="1">Cytoplasm</location>
    </subcellularLocation>
</comment>
<comment type="similarity">
    <text evidence="1">Belongs to the methyltransferase superfamily. L-isoaspartyl/D-aspartyl protein methyltransferase family.</text>
</comment>
<gene>
    <name evidence="1" type="primary">pcm</name>
    <name type="ordered locus">BAV1980</name>
</gene>
<dbReference type="EC" id="2.1.1.77" evidence="1"/>
<dbReference type="EMBL" id="AM167904">
    <property type="protein sequence ID" value="CAJ49589.1"/>
    <property type="molecule type" value="Genomic_DNA"/>
</dbReference>
<dbReference type="RefSeq" id="WP_012417646.1">
    <property type="nucleotide sequence ID" value="NC_010645.1"/>
</dbReference>
<dbReference type="SMR" id="Q2L008"/>
<dbReference type="STRING" id="360910.BAV1980"/>
<dbReference type="GeneID" id="92934958"/>
<dbReference type="KEGG" id="bav:BAV1980"/>
<dbReference type="eggNOG" id="COG2518">
    <property type="taxonomic scope" value="Bacteria"/>
</dbReference>
<dbReference type="HOGENOM" id="CLU_055432_1_0_4"/>
<dbReference type="OrthoDB" id="9810066at2"/>
<dbReference type="Proteomes" id="UP000001977">
    <property type="component" value="Chromosome"/>
</dbReference>
<dbReference type="GO" id="GO:0005737">
    <property type="term" value="C:cytoplasm"/>
    <property type="evidence" value="ECO:0007669"/>
    <property type="project" value="UniProtKB-SubCell"/>
</dbReference>
<dbReference type="GO" id="GO:0004719">
    <property type="term" value="F:protein-L-isoaspartate (D-aspartate) O-methyltransferase activity"/>
    <property type="evidence" value="ECO:0007669"/>
    <property type="project" value="UniProtKB-UniRule"/>
</dbReference>
<dbReference type="GO" id="GO:0032259">
    <property type="term" value="P:methylation"/>
    <property type="evidence" value="ECO:0007669"/>
    <property type="project" value="UniProtKB-KW"/>
</dbReference>
<dbReference type="GO" id="GO:0036211">
    <property type="term" value="P:protein modification process"/>
    <property type="evidence" value="ECO:0007669"/>
    <property type="project" value="UniProtKB-UniRule"/>
</dbReference>
<dbReference type="GO" id="GO:0030091">
    <property type="term" value="P:protein repair"/>
    <property type="evidence" value="ECO:0007669"/>
    <property type="project" value="UniProtKB-UniRule"/>
</dbReference>
<dbReference type="CDD" id="cd02440">
    <property type="entry name" value="AdoMet_MTases"/>
    <property type="match status" value="1"/>
</dbReference>
<dbReference type="FunFam" id="3.40.50.150:FF:000010">
    <property type="entry name" value="Protein-L-isoaspartate O-methyltransferase"/>
    <property type="match status" value="1"/>
</dbReference>
<dbReference type="Gene3D" id="3.40.50.150">
    <property type="entry name" value="Vaccinia Virus protein VP39"/>
    <property type="match status" value="1"/>
</dbReference>
<dbReference type="HAMAP" id="MF_00090">
    <property type="entry name" value="PIMT"/>
    <property type="match status" value="1"/>
</dbReference>
<dbReference type="InterPro" id="IPR000682">
    <property type="entry name" value="PCMT"/>
</dbReference>
<dbReference type="InterPro" id="IPR029063">
    <property type="entry name" value="SAM-dependent_MTases_sf"/>
</dbReference>
<dbReference type="NCBIfam" id="TIGR00080">
    <property type="entry name" value="pimt"/>
    <property type="match status" value="1"/>
</dbReference>
<dbReference type="NCBIfam" id="NF001453">
    <property type="entry name" value="PRK00312.1"/>
    <property type="match status" value="1"/>
</dbReference>
<dbReference type="PANTHER" id="PTHR11579">
    <property type="entry name" value="PROTEIN-L-ISOASPARTATE O-METHYLTRANSFERASE"/>
    <property type="match status" value="1"/>
</dbReference>
<dbReference type="PANTHER" id="PTHR11579:SF0">
    <property type="entry name" value="PROTEIN-L-ISOASPARTATE(D-ASPARTATE) O-METHYLTRANSFERASE"/>
    <property type="match status" value="1"/>
</dbReference>
<dbReference type="Pfam" id="PF01135">
    <property type="entry name" value="PCMT"/>
    <property type="match status" value="1"/>
</dbReference>
<dbReference type="SUPFAM" id="SSF53335">
    <property type="entry name" value="S-adenosyl-L-methionine-dependent methyltransferases"/>
    <property type="match status" value="1"/>
</dbReference>
<dbReference type="PROSITE" id="PS01279">
    <property type="entry name" value="PCMT"/>
    <property type="match status" value="1"/>
</dbReference>
<keyword id="KW-0963">Cytoplasm</keyword>
<keyword id="KW-0489">Methyltransferase</keyword>
<keyword id="KW-1185">Reference proteome</keyword>
<keyword id="KW-0949">S-adenosyl-L-methionine</keyword>
<keyword id="KW-0808">Transferase</keyword>
<reference key="1">
    <citation type="journal article" date="2006" name="J. Bacteriol.">
        <title>Comparison of the genome sequence of the poultry pathogen Bordetella avium with those of B. bronchiseptica, B. pertussis, and B. parapertussis reveals extensive diversity in surface structures associated with host interaction.</title>
        <authorList>
            <person name="Sebaihia M."/>
            <person name="Preston A."/>
            <person name="Maskell D.J."/>
            <person name="Kuzmiak H."/>
            <person name="Connell T.D."/>
            <person name="King N.D."/>
            <person name="Orndorff P.E."/>
            <person name="Miyamoto D.M."/>
            <person name="Thomson N.R."/>
            <person name="Harris D."/>
            <person name="Goble A."/>
            <person name="Lord A."/>
            <person name="Murphy L."/>
            <person name="Quail M.A."/>
            <person name="Rutter S."/>
            <person name="Squares R."/>
            <person name="Squares S."/>
            <person name="Woodward J."/>
            <person name="Parkhill J."/>
            <person name="Temple L.M."/>
        </authorList>
    </citation>
    <scope>NUCLEOTIDE SEQUENCE [LARGE SCALE GENOMIC DNA]</scope>
    <source>
        <strain>197N</strain>
    </source>
</reference>
<organism>
    <name type="scientific">Bordetella avium (strain 197N)</name>
    <dbReference type="NCBI Taxonomy" id="360910"/>
    <lineage>
        <taxon>Bacteria</taxon>
        <taxon>Pseudomonadati</taxon>
        <taxon>Pseudomonadota</taxon>
        <taxon>Betaproteobacteria</taxon>
        <taxon>Burkholderiales</taxon>
        <taxon>Alcaligenaceae</taxon>
        <taxon>Bordetella</taxon>
    </lineage>
</organism>
<evidence type="ECO:0000255" key="1">
    <source>
        <dbReference type="HAMAP-Rule" id="MF_00090"/>
    </source>
</evidence>
<evidence type="ECO:0000256" key="2">
    <source>
        <dbReference type="SAM" id="MobiDB-lite"/>
    </source>
</evidence>
<sequence length="264" mass="28283">MRKPVGSKDGSGVYSRQGLDGYTPANSNTRISTATLPRPEPLRPAASSANLGLNSDRLRLAMVQRLRQMGITDDRVLDAMAAVPRHTFVDEALASRAYEDAALPIGHSQTISQPWVVARMIAAVCEARAPSRVLEVGAGCGYQAAVLAQFVREVHSIERIRGLYELARANLRALRLSTRVRLIYGDGTQGVPGVAPFDAIVVAAAGLAIPQALLNQLAPGGRLIAPEGSTSQRLVLIERTGTASWKRMELEAVRFVPLKAGIQS</sequence>